<proteinExistence type="inferred from homology"/>
<geneLocation type="chloroplast"/>
<keyword id="KW-0150">Chloroplast</keyword>
<keyword id="KW-0507">mRNA processing</keyword>
<keyword id="KW-0934">Plastid</keyword>
<keyword id="KW-0694">RNA-binding</keyword>
<keyword id="KW-0819">tRNA processing</keyword>
<organism>
    <name type="scientific">Trifolium beckwithii</name>
    <name type="common">Beckwith's clover</name>
    <name type="synonym">Trifolium altissimum</name>
    <dbReference type="NCBI Taxonomy" id="247906"/>
    <lineage>
        <taxon>Eukaryota</taxon>
        <taxon>Viridiplantae</taxon>
        <taxon>Streptophyta</taxon>
        <taxon>Embryophyta</taxon>
        <taxon>Tracheophyta</taxon>
        <taxon>Spermatophyta</taxon>
        <taxon>Magnoliopsida</taxon>
        <taxon>eudicotyledons</taxon>
        <taxon>Gunneridae</taxon>
        <taxon>Pentapetalae</taxon>
        <taxon>rosids</taxon>
        <taxon>fabids</taxon>
        <taxon>Fabales</taxon>
        <taxon>Fabaceae</taxon>
        <taxon>Papilionoideae</taxon>
        <taxon>50 kb inversion clade</taxon>
        <taxon>NPAAA clade</taxon>
        <taxon>Hologalegina</taxon>
        <taxon>IRL clade</taxon>
        <taxon>Trifolieae</taxon>
        <taxon>Trifolium</taxon>
    </lineage>
</organism>
<feature type="chain" id="PRO_0000143742" description="Maturase K">
    <location>
        <begin position="1"/>
        <end position="506"/>
    </location>
</feature>
<sequence>MKEYRVYLERARSRQQDFLYPLIFREYIYGLAYSHNFNRSIFVENGGYDNKYSLLNVKRLITRMYQQNHLIISANDSNKNPFWGYNKNLYSQIISEGFAIVVEIPFFLQLSSSLEEAEIIKSYKNVRSIHSVFPFLEDKFTYLNYVSDIRIPYPIHLEILVQILRYWVKDVPFFHLLRLFLYHFCNWNCFIPTKKSISTFSKSNPRLFLFLYNFYVCEYESIFLFLRNKSYHLRLKSFSVFFERIFFYAKREHLVEVFSKDFSYTLPFFKDPNIHYVRYQGKCILASKNVPFLMNKWKYYFIHLWQCFFDVWSQPRTININQLSEHSFQLLGYFSNVRLNRSVVRSQMLQNTFLIEIVSKKLDIIVPIIPLIRSLAKAKFCNVLGHPISKPVWADSSDFDIIERFLRICRNLSHYYNGSSKKKSLYRIKYILRLSCIKTLACKHKSTVRTFLKRSGSEEFLEEFFTEEEEILSLIFPRDSFTLHRFHRNRIWYLDILFSNDLVNDE</sequence>
<evidence type="ECO:0000255" key="1">
    <source>
        <dbReference type="HAMAP-Rule" id="MF_01390"/>
    </source>
</evidence>
<comment type="function">
    <text evidence="1">Usually encoded in the trnK tRNA gene intron. Probably assists in splicing its own and other chloroplast group II introns.</text>
</comment>
<comment type="subcellular location">
    <subcellularLocation>
        <location>Plastid</location>
        <location>Chloroplast</location>
    </subcellularLocation>
</comment>
<comment type="similarity">
    <text evidence="1">Belongs to the intron maturase 2 family. MatK subfamily.</text>
</comment>
<dbReference type="EMBL" id="AY386946">
    <property type="protein sequence ID" value="AAQ92024.1"/>
    <property type="molecule type" value="Genomic_DNA"/>
</dbReference>
<dbReference type="GO" id="GO:0009507">
    <property type="term" value="C:chloroplast"/>
    <property type="evidence" value="ECO:0007669"/>
    <property type="project" value="UniProtKB-SubCell"/>
</dbReference>
<dbReference type="GO" id="GO:0003723">
    <property type="term" value="F:RNA binding"/>
    <property type="evidence" value="ECO:0007669"/>
    <property type="project" value="UniProtKB-KW"/>
</dbReference>
<dbReference type="GO" id="GO:0006397">
    <property type="term" value="P:mRNA processing"/>
    <property type="evidence" value="ECO:0007669"/>
    <property type="project" value="UniProtKB-KW"/>
</dbReference>
<dbReference type="GO" id="GO:0008380">
    <property type="term" value="P:RNA splicing"/>
    <property type="evidence" value="ECO:0007669"/>
    <property type="project" value="UniProtKB-UniRule"/>
</dbReference>
<dbReference type="GO" id="GO:0008033">
    <property type="term" value="P:tRNA processing"/>
    <property type="evidence" value="ECO:0007669"/>
    <property type="project" value="UniProtKB-KW"/>
</dbReference>
<dbReference type="HAMAP" id="MF_01390">
    <property type="entry name" value="MatK"/>
    <property type="match status" value="1"/>
</dbReference>
<dbReference type="InterPro" id="IPR024937">
    <property type="entry name" value="Domain_X"/>
</dbReference>
<dbReference type="InterPro" id="IPR002866">
    <property type="entry name" value="Maturase_MatK"/>
</dbReference>
<dbReference type="InterPro" id="IPR024942">
    <property type="entry name" value="Maturase_MatK_N"/>
</dbReference>
<dbReference type="PANTHER" id="PTHR34811">
    <property type="entry name" value="MATURASE K"/>
    <property type="match status" value="1"/>
</dbReference>
<dbReference type="PANTHER" id="PTHR34811:SF1">
    <property type="entry name" value="MATURASE K"/>
    <property type="match status" value="1"/>
</dbReference>
<dbReference type="Pfam" id="PF01348">
    <property type="entry name" value="Intron_maturas2"/>
    <property type="match status" value="1"/>
</dbReference>
<dbReference type="Pfam" id="PF01824">
    <property type="entry name" value="MatK_N"/>
    <property type="match status" value="1"/>
</dbReference>
<gene>
    <name evidence="1" type="primary">matK</name>
</gene>
<name>MATK_TRIBE</name>
<reference key="1">
    <citation type="journal article" date="2004" name="Am. J. Bot.">
        <title>A phylogeny of legumes (Leguminosae) based on analysis of the plastid matK gene resolves many well-supported subclades within the family.</title>
        <authorList>
            <person name="Wojciechowski M.F."/>
            <person name="Lavin M."/>
            <person name="Sanderson M.J."/>
        </authorList>
        <dbReference type="AGRICOLA" id="IND43661289"/>
    </citation>
    <scope>NUCLEOTIDE SEQUENCE [GENOMIC DNA]</scope>
</reference>
<accession>Q5YJV6</accession>
<protein>
    <recommendedName>
        <fullName evidence="1">Maturase K</fullName>
    </recommendedName>
    <alternativeName>
        <fullName evidence="1">Intron maturase</fullName>
    </alternativeName>
</protein>